<comment type="function">
    <text evidence="1">Digests double-stranded RNA. Involved in the processing of primary rRNA transcript to yield the immediate precursors to the large and small rRNAs (23S and 16S). Processes some mRNAs, and tRNAs when they are encoded in the rRNA operon. Processes pre-crRNA and tracrRNA of type II CRISPR loci if present in the organism.</text>
</comment>
<comment type="catalytic activity">
    <reaction evidence="1">
        <text>Endonucleolytic cleavage to 5'-phosphomonoester.</text>
        <dbReference type="EC" id="3.1.26.3"/>
    </reaction>
</comment>
<comment type="cofactor">
    <cofactor evidence="1">
        <name>Mg(2+)</name>
        <dbReference type="ChEBI" id="CHEBI:18420"/>
    </cofactor>
</comment>
<comment type="subunit">
    <text evidence="1">Homodimer.</text>
</comment>
<comment type="subcellular location">
    <subcellularLocation>
        <location evidence="1">Cytoplasm</location>
    </subcellularLocation>
</comment>
<comment type="similarity">
    <text evidence="1">Belongs to the ribonuclease III family.</text>
</comment>
<accession>B3R1Z9</accession>
<dbReference type="EC" id="3.1.26.3" evidence="1"/>
<dbReference type="EMBL" id="CU633749">
    <property type="protein sequence ID" value="CAQ69996.1"/>
    <property type="molecule type" value="Genomic_DNA"/>
</dbReference>
<dbReference type="RefSeq" id="WP_012353305.1">
    <property type="nucleotide sequence ID" value="NC_010528.1"/>
</dbReference>
<dbReference type="SMR" id="B3R1Z9"/>
<dbReference type="GeneID" id="29762398"/>
<dbReference type="KEGG" id="cti:RALTA_A2056"/>
<dbReference type="eggNOG" id="COG0571">
    <property type="taxonomic scope" value="Bacteria"/>
</dbReference>
<dbReference type="HOGENOM" id="CLU_000907_1_1_4"/>
<dbReference type="BioCyc" id="CTAI977880:RALTA_RS09985-MONOMER"/>
<dbReference type="Proteomes" id="UP000001692">
    <property type="component" value="Chromosome 1"/>
</dbReference>
<dbReference type="GO" id="GO:0005737">
    <property type="term" value="C:cytoplasm"/>
    <property type="evidence" value="ECO:0007669"/>
    <property type="project" value="UniProtKB-SubCell"/>
</dbReference>
<dbReference type="GO" id="GO:0003725">
    <property type="term" value="F:double-stranded RNA binding"/>
    <property type="evidence" value="ECO:0007669"/>
    <property type="project" value="TreeGrafter"/>
</dbReference>
<dbReference type="GO" id="GO:0046872">
    <property type="term" value="F:metal ion binding"/>
    <property type="evidence" value="ECO:0007669"/>
    <property type="project" value="UniProtKB-KW"/>
</dbReference>
<dbReference type="GO" id="GO:0004525">
    <property type="term" value="F:ribonuclease III activity"/>
    <property type="evidence" value="ECO:0007669"/>
    <property type="project" value="UniProtKB-UniRule"/>
</dbReference>
<dbReference type="GO" id="GO:0019843">
    <property type="term" value="F:rRNA binding"/>
    <property type="evidence" value="ECO:0007669"/>
    <property type="project" value="UniProtKB-KW"/>
</dbReference>
<dbReference type="GO" id="GO:0006397">
    <property type="term" value="P:mRNA processing"/>
    <property type="evidence" value="ECO:0007669"/>
    <property type="project" value="UniProtKB-UniRule"/>
</dbReference>
<dbReference type="GO" id="GO:0010468">
    <property type="term" value="P:regulation of gene expression"/>
    <property type="evidence" value="ECO:0007669"/>
    <property type="project" value="TreeGrafter"/>
</dbReference>
<dbReference type="GO" id="GO:0006364">
    <property type="term" value="P:rRNA processing"/>
    <property type="evidence" value="ECO:0007669"/>
    <property type="project" value="UniProtKB-UniRule"/>
</dbReference>
<dbReference type="GO" id="GO:0008033">
    <property type="term" value="P:tRNA processing"/>
    <property type="evidence" value="ECO:0007669"/>
    <property type="project" value="UniProtKB-KW"/>
</dbReference>
<dbReference type="CDD" id="cd10845">
    <property type="entry name" value="DSRM_RNAse_III_family"/>
    <property type="match status" value="1"/>
</dbReference>
<dbReference type="CDD" id="cd00593">
    <property type="entry name" value="RIBOc"/>
    <property type="match status" value="1"/>
</dbReference>
<dbReference type="FunFam" id="1.10.1520.10:FF:000001">
    <property type="entry name" value="Ribonuclease 3"/>
    <property type="match status" value="1"/>
</dbReference>
<dbReference type="FunFam" id="3.30.160.20:FF:000003">
    <property type="entry name" value="Ribonuclease 3"/>
    <property type="match status" value="1"/>
</dbReference>
<dbReference type="Gene3D" id="3.30.160.20">
    <property type="match status" value="1"/>
</dbReference>
<dbReference type="Gene3D" id="1.10.1520.10">
    <property type="entry name" value="Ribonuclease III domain"/>
    <property type="match status" value="1"/>
</dbReference>
<dbReference type="HAMAP" id="MF_00104">
    <property type="entry name" value="RNase_III"/>
    <property type="match status" value="1"/>
</dbReference>
<dbReference type="InterPro" id="IPR014720">
    <property type="entry name" value="dsRBD_dom"/>
</dbReference>
<dbReference type="InterPro" id="IPR011907">
    <property type="entry name" value="RNase_III"/>
</dbReference>
<dbReference type="InterPro" id="IPR000999">
    <property type="entry name" value="RNase_III_dom"/>
</dbReference>
<dbReference type="InterPro" id="IPR036389">
    <property type="entry name" value="RNase_III_sf"/>
</dbReference>
<dbReference type="NCBIfam" id="TIGR02191">
    <property type="entry name" value="RNaseIII"/>
    <property type="match status" value="1"/>
</dbReference>
<dbReference type="PANTHER" id="PTHR11207:SF0">
    <property type="entry name" value="RIBONUCLEASE 3"/>
    <property type="match status" value="1"/>
</dbReference>
<dbReference type="PANTHER" id="PTHR11207">
    <property type="entry name" value="RIBONUCLEASE III"/>
    <property type="match status" value="1"/>
</dbReference>
<dbReference type="Pfam" id="PF00035">
    <property type="entry name" value="dsrm"/>
    <property type="match status" value="1"/>
</dbReference>
<dbReference type="Pfam" id="PF14622">
    <property type="entry name" value="Ribonucleas_3_3"/>
    <property type="match status" value="1"/>
</dbReference>
<dbReference type="SMART" id="SM00358">
    <property type="entry name" value="DSRM"/>
    <property type="match status" value="1"/>
</dbReference>
<dbReference type="SMART" id="SM00535">
    <property type="entry name" value="RIBOc"/>
    <property type="match status" value="1"/>
</dbReference>
<dbReference type="SUPFAM" id="SSF54768">
    <property type="entry name" value="dsRNA-binding domain-like"/>
    <property type="match status" value="1"/>
</dbReference>
<dbReference type="SUPFAM" id="SSF69065">
    <property type="entry name" value="RNase III domain-like"/>
    <property type="match status" value="1"/>
</dbReference>
<dbReference type="PROSITE" id="PS50137">
    <property type="entry name" value="DS_RBD"/>
    <property type="match status" value="1"/>
</dbReference>
<dbReference type="PROSITE" id="PS00517">
    <property type="entry name" value="RNASE_3_1"/>
    <property type="match status" value="1"/>
</dbReference>
<dbReference type="PROSITE" id="PS50142">
    <property type="entry name" value="RNASE_3_2"/>
    <property type="match status" value="1"/>
</dbReference>
<evidence type="ECO:0000255" key="1">
    <source>
        <dbReference type="HAMAP-Rule" id="MF_00104"/>
    </source>
</evidence>
<evidence type="ECO:0000256" key="2">
    <source>
        <dbReference type="SAM" id="MobiDB-lite"/>
    </source>
</evidence>
<protein>
    <recommendedName>
        <fullName evidence="1">Ribonuclease 3</fullName>
        <ecNumber evidence="1">3.1.26.3</ecNumber>
    </recommendedName>
    <alternativeName>
        <fullName evidence="1">Ribonuclease III</fullName>
        <shortName evidence="1">RNase III</shortName>
    </alternativeName>
</protein>
<keyword id="KW-0963">Cytoplasm</keyword>
<keyword id="KW-0255">Endonuclease</keyword>
<keyword id="KW-0378">Hydrolase</keyword>
<keyword id="KW-0460">Magnesium</keyword>
<keyword id="KW-0479">Metal-binding</keyword>
<keyword id="KW-0507">mRNA processing</keyword>
<keyword id="KW-0540">Nuclease</keyword>
<keyword id="KW-0694">RNA-binding</keyword>
<keyword id="KW-0698">rRNA processing</keyword>
<keyword id="KW-0699">rRNA-binding</keyword>
<keyword id="KW-0819">tRNA processing</keyword>
<reference key="1">
    <citation type="journal article" date="2008" name="Genome Res.">
        <title>Genome sequence of the beta-rhizobium Cupriavidus taiwanensis and comparative genomics of rhizobia.</title>
        <authorList>
            <person name="Amadou C."/>
            <person name="Pascal G."/>
            <person name="Mangenot S."/>
            <person name="Glew M."/>
            <person name="Bontemps C."/>
            <person name="Capela D."/>
            <person name="Carrere S."/>
            <person name="Cruveiller S."/>
            <person name="Dossat C."/>
            <person name="Lajus A."/>
            <person name="Marchetti M."/>
            <person name="Poinsot V."/>
            <person name="Rouy Z."/>
            <person name="Servin B."/>
            <person name="Saad M."/>
            <person name="Schenowitz C."/>
            <person name="Barbe V."/>
            <person name="Batut J."/>
            <person name="Medigue C."/>
            <person name="Masson-Boivin C."/>
        </authorList>
    </citation>
    <scope>NUCLEOTIDE SEQUENCE [LARGE SCALE GENOMIC DNA]</scope>
    <source>
        <strain>DSM 17343 / BCRC 17206 / CCUG 44338 / CIP 107171 / LMG 19424 / R1</strain>
    </source>
</reference>
<feature type="chain" id="PRO_1000094105" description="Ribonuclease 3">
    <location>
        <begin position="1"/>
        <end position="256"/>
    </location>
</feature>
<feature type="domain" description="RNase III" evidence="1">
    <location>
        <begin position="3"/>
        <end position="125"/>
    </location>
</feature>
<feature type="domain" description="DRBM" evidence="1">
    <location>
        <begin position="152"/>
        <end position="222"/>
    </location>
</feature>
<feature type="region of interest" description="Disordered" evidence="2">
    <location>
        <begin position="229"/>
        <end position="256"/>
    </location>
</feature>
<feature type="active site" evidence="1">
    <location>
        <position position="42"/>
    </location>
</feature>
<feature type="active site" evidence="1">
    <location>
        <position position="114"/>
    </location>
</feature>
<feature type="binding site" evidence="1">
    <location>
        <position position="38"/>
    </location>
    <ligand>
        <name>Mg(2+)</name>
        <dbReference type="ChEBI" id="CHEBI:18420"/>
    </ligand>
</feature>
<feature type="binding site" evidence="1">
    <location>
        <position position="111"/>
    </location>
    <ligand>
        <name>Mg(2+)</name>
        <dbReference type="ChEBI" id="CHEBI:18420"/>
    </ligand>
</feature>
<feature type="binding site" evidence="1">
    <location>
        <position position="114"/>
    </location>
    <ligand>
        <name>Mg(2+)</name>
        <dbReference type="ChEBI" id="CHEBI:18420"/>
    </ligand>
</feature>
<name>RNC_CUPTR</name>
<proteinExistence type="inferred from homology"/>
<gene>
    <name evidence="1" type="primary">rnc</name>
    <name type="ordered locus">RALTA_A2056</name>
</gene>
<organism>
    <name type="scientific">Cupriavidus taiwanensis (strain DSM 17343 / BCRC 17206 / CCUG 44338 / CIP 107171 / LMG 19424 / R1)</name>
    <name type="common">Ralstonia taiwanensis (strain LMG 19424)</name>
    <dbReference type="NCBI Taxonomy" id="977880"/>
    <lineage>
        <taxon>Bacteria</taxon>
        <taxon>Pseudomonadati</taxon>
        <taxon>Pseudomonadota</taxon>
        <taxon>Betaproteobacteria</taxon>
        <taxon>Burkholderiales</taxon>
        <taxon>Burkholderiaceae</taxon>
        <taxon>Cupriavidus</taxon>
    </lineage>
</organism>
<sequence>MNLDALQQRLGYRFSKPELLQQALTHRSHSAQHNERLEFLGDSVLNCAVADMLYGMFGKLDEGDLSRVRANLVKQQALYEIAQMLQLSDTLRLGEGELKSGGFRRPSILADALEAIVGAVFLDAGFDAARALIRKLYIPILEQVDPRTLGKDAKTLLQEYLQGHKIALPQYNVIATHGAAHSQQFEVECTVPKLEVRVFGTGASRRAAEQAAAKLALDEVQKLVPQLLKRSRAERTGKTRKQPQPQDPQLSLRLKE</sequence>